<dbReference type="EMBL" id="DQ347958">
    <property type="protein sequence ID" value="ABC56249.1"/>
    <property type="molecule type" value="Genomic_DNA"/>
</dbReference>
<dbReference type="RefSeq" id="YP_538886.1">
    <property type="nucleotide sequence ID" value="NC_007943.1"/>
</dbReference>
<dbReference type="SMR" id="Q2MIF1"/>
<dbReference type="GeneID" id="3989419"/>
<dbReference type="GO" id="GO:0009507">
    <property type="term" value="C:chloroplast"/>
    <property type="evidence" value="ECO:0007669"/>
    <property type="project" value="UniProtKB-SubCell"/>
</dbReference>
<dbReference type="GO" id="GO:0022625">
    <property type="term" value="C:cytosolic large ribosomal subunit"/>
    <property type="evidence" value="ECO:0007669"/>
    <property type="project" value="TreeGrafter"/>
</dbReference>
<dbReference type="GO" id="GO:0070180">
    <property type="term" value="F:large ribosomal subunit rRNA binding"/>
    <property type="evidence" value="ECO:0007669"/>
    <property type="project" value="TreeGrafter"/>
</dbReference>
<dbReference type="GO" id="GO:0003735">
    <property type="term" value="F:structural constituent of ribosome"/>
    <property type="evidence" value="ECO:0007669"/>
    <property type="project" value="InterPro"/>
</dbReference>
<dbReference type="GO" id="GO:0006412">
    <property type="term" value="P:translation"/>
    <property type="evidence" value="ECO:0007669"/>
    <property type="project" value="UniProtKB-UniRule"/>
</dbReference>
<dbReference type="CDD" id="cd00337">
    <property type="entry name" value="Ribosomal_uL14"/>
    <property type="match status" value="1"/>
</dbReference>
<dbReference type="FunFam" id="2.40.150.20:FF:000002">
    <property type="entry name" value="50S ribosomal protein L14, chloroplastic"/>
    <property type="match status" value="1"/>
</dbReference>
<dbReference type="Gene3D" id="2.40.150.20">
    <property type="entry name" value="Ribosomal protein L14"/>
    <property type="match status" value="1"/>
</dbReference>
<dbReference type="HAMAP" id="MF_01367">
    <property type="entry name" value="Ribosomal_uL14"/>
    <property type="match status" value="1"/>
</dbReference>
<dbReference type="InterPro" id="IPR000218">
    <property type="entry name" value="Ribosomal_uL14"/>
</dbReference>
<dbReference type="InterPro" id="IPR005745">
    <property type="entry name" value="Ribosomal_uL14_bac-type"/>
</dbReference>
<dbReference type="InterPro" id="IPR019972">
    <property type="entry name" value="Ribosomal_uL14_CS"/>
</dbReference>
<dbReference type="InterPro" id="IPR036853">
    <property type="entry name" value="Ribosomal_uL14_sf"/>
</dbReference>
<dbReference type="NCBIfam" id="TIGR01067">
    <property type="entry name" value="rplN_bact"/>
    <property type="match status" value="1"/>
</dbReference>
<dbReference type="PANTHER" id="PTHR11761">
    <property type="entry name" value="50S/60S RIBOSOMAL PROTEIN L14/L23"/>
    <property type="match status" value="1"/>
</dbReference>
<dbReference type="PANTHER" id="PTHR11761:SF3">
    <property type="entry name" value="LARGE RIBOSOMAL SUBUNIT PROTEIN UL14M"/>
    <property type="match status" value="1"/>
</dbReference>
<dbReference type="Pfam" id="PF00238">
    <property type="entry name" value="Ribosomal_L14"/>
    <property type="match status" value="1"/>
</dbReference>
<dbReference type="SMART" id="SM01374">
    <property type="entry name" value="Ribosomal_L14"/>
    <property type="match status" value="1"/>
</dbReference>
<dbReference type="SUPFAM" id="SSF50193">
    <property type="entry name" value="Ribosomal protein L14"/>
    <property type="match status" value="1"/>
</dbReference>
<dbReference type="PROSITE" id="PS00049">
    <property type="entry name" value="RIBOSOMAL_L14"/>
    <property type="match status" value="1"/>
</dbReference>
<feature type="chain" id="PRO_0000276364" description="Large ribosomal subunit protein uL14c">
    <location>
        <begin position="1"/>
        <end position="122"/>
    </location>
</feature>
<protein>
    <recommendedName>
        <fullName evidence="1">Large ribosomal subunit protein uL14c</fullName>
    </recommendedName>
    <alternativeName>
        <fullName evidence="2">50S ribosomal protein L14, chloroplastic</fullName>
    </alternativeName>
</protein>
<accession>Q2MIF1</accession>
<evidence type="ECO:0000255" key="1">
    <source>
        <dbReference type="HAMAP-Rule" id="MF_01367"/>
    </source>
</evidence>
<evidence type="ECO:0000305" key="2"/>
<reference key="1">
    <citation type="journal article" date="2006" name="Theor. Appl. Genet.">
        <title>Complete chloroplast genome sequences of Solanum bulbocastanum, Solanum lycopersicum and comparative analyses with other Solanaceae genomes.</title>
        <authorList>
            <person name="Daniell H."/>
            <person name="Lee S.-B."/>
            <person name="Grevich J."/>
            <person name="Saski C."/>
            <person name="Quesada-Vargas T."/>
            <person name="Guda C."/>
            <person name="Tomkins J."/>
            <person name="Jansen R.K."/>
        </authorList>
    </citation>
    <scope>NUCLEOTIDE SEQUENCE [LARGE SCALE GENOMIC DNA]</scope>
    <source>
        <strain>cv. PT29</strain>
    </source>
</reference>
<name>RK14_SOLBU</name>
<comment type="function">
    <text evidence="1">Binds to 23S rRNA.</text>
</comment>
<comment type="subunit">
    <text evidence="1">Part of the 50S ribosomal subunit.</text>
</comment>
<comment type="subcellular location">
    <subcellularLocation>
        <location>Plastid</location>
        <location>Chloroplast</location>
    </subcellularLocation>
</comment>
<comment type="similarity">
    <text evidence="1">Belongs to the universal ribosomal protein uL14 family.</text>
</comment>
<proteinExistence type="inferred from homology"/>
<gene>
    <name evidence="1" type="primary">rpl14</name>
</gene>
<keyword id="KW-0150">Chloroplast</keyword>
<keyword id="KW-0934">Plastid</keyword>
<keyword id="KW-0687">Ribonucleoprotein</keyword>
<keyword id="KW-0689">Ribosomal protein</keyword>
<keyword id="KW-0694">RNA-binding</keyword>
<keyword id="KW-0699">rRNA-binding</keyword>
<sequence>MIQPQTHLNVADNSGARELMCIRIIGASNRRYAHIGDVIVAVIKEAVPNMPLERSEVVRAVIVRTCKELKRDNGMIIRYDDNAAVVIDQEGNPKGTRIFGAIARELRELNFTKIVSLAPEVL</sequence>
<geneLocation type="chloroplast"/>
<organism>
    <name type="scientific">Solanum bulbocastanum</name>
    <name type="common">Wild potato</name>
    <dbReference type="NCBI Taxonomy" id="147425"/>
    <lineage>
        <taxon>Eukaryota</taxon>
        <taxon>Viridiplantae</taxon>
        <taxon>Streptophyta</taxon>
        <taxon>Embryophyta</taxon>
        <taxon>Tracheophyta</taxon>
        <taxon>Spermatophyta</taxon>
        <taxon>Magnoliopsida</taxon>
        <taxon>eudicotyledons</taxon>
        <taxon>Gunneridae</taxon>
        <taxon>Pentapetalae</taxon>
        <taxon>asterids</taxon>
        <taxon>lamiids</taxon>
        <taxon>Solanales</taxon>
        <taxon>Solanaceae</taxon>
        <taxon>Solanoideae</taxon>
        <taxon>Solaneae</taxon>
        <taxon>Solanum</taxon>
    </lineage>
</organism>